<comment type="function">
    <text evidence="1">Catalyzes the attachment of serine to tRNA(Ser). Is also able to aminoacylate tRNA(Sec) with serine, to form the misacylated tRNA L-seryl-tRNA(Sec), which will be further converted into selenocysteinyl-tRNA(Sec).</text>
</comment>
<comment type="catalytic activity">
    <reaction evidence="1">
        <text>tRNA(Ser) + L-serine + ATP = L-seryl-tRNA(Ser) + AMP + diphosphate + H(+)</text>
        <dbReference type="Rhea" id="RHEA:12292"/>
        <dbReference type="Rhea" id="RHEA-COMP:9669"/>
        <dbReference type="Rhea" id="RHEA-COMP:9703"/>
        <dbReference type="ChEBI" id="CHEBI:15378"/>
        <dbReference type="ChEBI" id="CHEBI:30616"/>
        <dbReference type="ChEBI" id="CHEBI:33019"/>
        <dbReference type="ChEBI" id="CHEBI:33384"/>
        <dbReference type="ChEBI" id="CHEBI:78442"/>
        <dbReference type="ChEBI" id="CHEBI:78533"/>
        <dbReference type="ChEBI" id="CHEBI:456215"/>
        <dbReference type="EC" id="6.1.1.11"/>
    </reaction>
</comment>
<comment type="catalytic activity">
    <reaction evidence="1">
        <text>tRNA(Sec) + L-serine + ATP = L-seryl-tRNA(Sec) + AMP + diphosphate + H(+)</text>
        <dbReference type="Rhea" id="RHEA:42580"/>
        <dbReference type="Rhea" id="RHEA-COMP:9742"/>
        <dbReference type="Rhea" id="RHEA-COMP:10128"/>
        <dbReference type="ChEBI" id="CHEBI:15378"/>
        <dbReference type="ChEBI" id="CHEBI:30616"/>
        <dbReference type="ChEBI" id="CHEBI:33019"/>
        <dbReference type="ChEBI" id="CHEBI:33384"/>
        <dbReference type="ChEBI" id="CHEBI:78442"/>
        <dbReference type="ChEBI" id="CHEBI:78533"/>
        <dbReference type="ChEBI" id="CHEBI:456215"/>
        <dbReference type="EC" id="6.1.1.11"/>
    </reaction>
</comment>
<comment type="pathway">
    <text evidence="1">Aminoacyl-tRNA biosynthesis; selenocysteinyl-tRNA(Sec) biosynthesis; L-seryl-tRNA(Sec) from L-serine and tRNA(Sec): step 1/1.</text>
</comment>
<comment type="subunit">
    <text evidence="1">Homodimer. The tRNA molecule binds across the dimer.</text>
</comment>
<comment type="subcellular location">
    <subcellularLocation>
        <location evidence="1">Cytoplasm</location>
    </subcellularLocation>
</comment>
<comment type="domain">
    <text evidence="1">Consists of two distinct domains, a catalytic core and a N-terminal extension that is involved in tRNA binding.</text>
</comment>
<comment type="similarity">
    <text evidence="1">Belongs to the class-II aminoacyl-tRNA synthetase family. Type-1 seryl-tRNA synthetase subfamily.</text>
</comment>
<proteinExistence type="inferred from homology"/>
<gene>
    <name evidence="1" type="primary">serS</name>
    <name type="ordered locus">VC0395_A0628</name>
    <name type="ordered locus">VC395_1125</name>
</gene>
<protein>
    <recommendedName>
        <fullName evidence="1">Serine--tRNA ligase</fullName>
        <ecNumber evidence="1">6.1.1.11</ecNumber>
    </recommendedName>
    <alternativeName>
        <fullName evidence="1">Seryl-tRNA synthetase</fullName>
        <shortName evidence="1">SerRS</shortName>
    </alternativeName>
    <alternativeName>
        <fullName evidence="1">Seryl-tRNA(Ser/Sec) synthetase</fullName>
    </alternativeName>
</protein>
<reference key="1">
    <citation type="submission" date="2007-03" db="EMBL/GenBank/DDBJ databases">
        <authorList>
            <person name="Heidelberg J."/>
        </authorList>
    </citation>
    <scope>NUCLEOTIDE SEQUENCE [LARGE SCALE GENOMIC DNA]</scope>
    <source>
        <strain>ATCC 39541 / Classical Ogawa 395 / O395</strain>
    </source>
</reference>
<reference key="2">
    <citation type="journal article" date="2008" name="PLoS ONE">
        <title>A recalibrated molecular clock and independent origins for the cholera pandemic clones.</title>
        <authorList>
            <person name="Feng L."/>
            <person name="Reeves P.R."/>
            <person name="Lan R."/>
            <person name="Ren Y."/>
            <person name="Gao C."/>
            <person name="Zhou Z."/>
            <person name="Ren Y."/>
            <person name="Cheng J."/>
            <person name="Wang W."/>
            <person name="Wang J."/>
            <person name="Qian W."/>
            <person name="Li D."/>
            <person name="Wang L."/>
        </authorList>
    </citation>
    <scope>NUCLEOTIDE SEQUENCE [LARGE SCALE GENOMIC DNA]</scope>
    <source>
        <strain>ATCC 39541 / Classical Ogawa 395 / O395</strain>
    </source>
</reference>
<evidence type="ECO:0000255" key="1">
    <source>
        <dbReference type="HAMAP-Rule" id="MF_00176"/>
    </source>
</evidence>
<dbReference type="EC" id="6.1.1.11" evidence="1"/>
<dbReference type="EMBL" id="CP000627">
    <property type="protein sequence ID" value="ABQ21223.1"/>
    <property type="molecule type" value="Genomic_DNA"/>
</dbReference>
<dbReference type="EMBL" id="CP001235">
    <property type="protein sequence ID" value="ACP09135.1"/>
    <property type="molecule type" value="Genomic_DNA"/>
</dbReference>
<dbReference type="RefSeq" id="WP_000887349.1">
    <property type="nucleotide sequence ID" value="NZ_JAACZH010000005.1"/>
</dbReference>
<dbReference type="SMR" id="A5F2H1"/>
<dbReference type="GeneID" id="88785456"/>
<dbReference type="KEGG" id="vco:VC0395_A0628"/>
<dbReference type="KEGG" id="vcr:VC395_1125"/>
<dbReference type="PATRIC" id="fig|345073.21.peg.1092"/>
<dbReference type="eggNOG" id="COG0172">
    <property type="taxonomic scope" value="Bacteria"/>
</dbReference>
<dbReference type="HOGENOM" id="CLU_023797_1_1_6"/>
<dbReference type="OrthoDB" id="9804647at2"/>
<dbReference type="UniPathway" id="UPA00906">
    <property type="reaction ID" value="UER00895"/>
</dbReference>
<dbReference type="Proteomes" id="UP000000249">
    <property type="component" value="Chromosome 2"/>
</dbReference>
<dbReference type="GO" id="GO:0005737">
    <property type="term" value="C:cytoplasm"/>
    <property type="evidence" value="ECO:0007669"/>
    <property type="project" value="UniProtKB-SubCell"/>
</dbReference>
<dbReference type="GO" id="GO:0005524">
    <property type="term" value="F:ATP binding"/>
    <property type="evidence" value="ECO:0007669"/>
    <property type="project" value="UniProtKB-UniRule"/>
</dbReference>
<dbReference type="GO" id="GO:0004828">
    <property type="term" value="F:serine-tRNA ligase activity"/>
    <property type="evidence" value="ECO:0007669"/>
    <property type="project" value="UniProtKB-UniRule"/>
</dbReference>
<dbReference type="GO" id="GO:0016260">
    <property type="term" value="P:selenocysteine biosynthetic process"/>
    <property type="evidence" value="ECO:0007669"/>
    <property type="project" value="UniProtKB-UniRule"/>
</dbReference>
<dbReference type="GO" id="GO:0006434">
    <property type="term" value="P:seryl-tRNA aminoacylation"/>
    <property type="evidence" value="ECO:0007669"/>
    <property type="project" value="UniProtKB-UniRule"/>
</dbReference>
<dbReference type="CDD" id="cd00770">
    <property type="entry name" value="SerRS_core"/>
    <property type="match status" value="1"/>
</dbReference>
<dbReference type="FunFam" id="1.10.287.40:FF:000001">
    <property type="entry name" value="Serine--tRNA ligase"/>
    <property type="match status" value="1"/>
</dbReference>
<dbReference type="FunFam" id="3.30.930.10:FF:000018">
    <property type="entry name" value="Serine--tRNA ligase"/>
    <property type="match status" value="1"/>
</dbReference>
<dbReference type="Gene3D" id="3.30.930.10">
    <property type="entry name" value="Bira Bifunctional Protein, Domain 2"/>
    <property type="match status" value="1"/>
</dbReference>
<dbReference type="Gene3D" id="1.10.287.40">
    <property type="entry name" value="Serine-tRNA synthetase, tRNA binding domain"/>
    <property type="match status" value="1"/>
</dbReference>
<dbReference type="HAMAP" id="MF_00176">
    <property type="entry name" value="Ser_tRNA_synth_type1"/>
    <property type="match status" value="1"/>
</dbReference>
<dbReference type="InterPro" id="IPR002314">
    <property type="entry name" value="aa-tRNA-synt_IIb"/>
</dbReference>
<dbReference type="InterPro" id="IPR006195">
    <property type="entry name" value="aa-tRNA-synth_II"/>
</dbReference>
<dbReference type="InterPro" id="IPR045864">
    <property type="entry name" value="aa-tRNA-synth_II/BPL/LPL"/>
</dbReference>
<dbReference type="InterPro" id="IPR002317">
    <property type="entry name" value="Ser-tRNA-ligase_type_1"/>
</dbReference>
<dbReference type="InterPro" id="IPR015866">
    <property type="entry name" value="Ser-tRNA-synth_1_N"/>
</dbReference>
<dbReference type="InterPro" id="IPR042103">
    <property type="entry name" value="SerRS_1_N_sf"/>
</dbReference>
<dbReference type="InterPro" id="IPR033729">
    <property type="entry name" value="SerRS_core"/>
</dbReference>
<dbReference type="InterPro" id="IPR010978">
    <property type="entry name" value="tRNA-bd_arm"/>
</dbReference>
<dbReference type="NCBIfam" id="TIGR00414">
    <property type="entry name" value="serS"/>
    <property type="match status" value="1"/>
</dbReference>
<dbReference type="PANTHER" id="PTHR43697:SF1">
    <property type="entry name" value="SERINE--TRNA LIGASE"/>
    <property type="match status" value="1"/>
</dbReference>
<dbReference type="PANTHER" id="PTHR43697">
    <property type="entry name" value="SERYL-TRNA SYNTHETASE"/>
    <property type="match status" value="1"/>
</dbReference>
<dbReference type="Pfam" id="PF02403">
    <property type="entry name" value="Seryl_tRNA_N"/>
    <property type="match status" value="1"/>
</dbReference>
<dbReference type="Pfam" id="PF00587">
    <property type="entry name" value="tRNA-synt_2b"/>
    <property type="match status" value="1"/>
</dbReference>
<dbReference type="PIRSF" id="PIRSF001529">
    <property type="entry name" value="Ser-tRNA-synth_IIa"/>
    <property type="match status" value="1"/>
</dbReference>
<dbReference type="PRINTS" id="PR00981">
    <property type="entry name" value="TRNASYNTHSER"/>
</dbReference>
<dbReference type="SUPFAM" id="SSF55681">
    <property type="entry name" value="Class II aaRS and biotin synthetases"/>
    <property type="match status" value="1"/>
</dbReference>
<dbReference type="SUPFAM" id="SSF46589">
    <property type="entry name" value="tRNA-binding arm"/>
    <property type="match status" value="1"/>
</dbReference>
<dbReference type="PROSITE" id="PS50862">
    <property type="entry name" value="AA_TRNA_LIGASE_II"/>
    <property type="match status" value="1"/>
</dbReference>
<accession>A5F2H1</accession>
<accession>C3LZB9</accession>
<feature type="chain" id="PRO_1000071640" description="Serine--tRNA ligase">
    <location>
        <begin position="1"/>
        <end position="435"/>
    </location>
</feature>
<feature type="binding site" evidence="1">
    <location>
        <begin position="242"/>
        <end position="244"/>
    </location>
    <ligand>
        <name>L-serine</name>
        <dbReference type="ChEBI" id="CHEBI:33384"/>
    </ligand>
</feature>
<feature type="binding site" evidence="1">
    <location>
        <begin position="273"/>
        <end position="275"/>
    </location>
    <ligand>
        <name>ATP</name>
        <dbReference type="ChEBI" id="CHEBI:30616"/>
    </ligand>
</feature>
<feature type="binding site" evidence="1">
    <location>
        <position position="296"/>
    </location>
    <ligand>
        <name>L-serine</name>
        <dbReference type="ChEBI" id="CHEBI:33384"/>
    </ligand>
</feature>
<feature type="binding site" evidence="1">
    <location>
        <begin position="360"/>
        <end position="363"/>
    </location>
    <ligand>
        <name>ATP</name>
        <dbReference type="ChEBI" id="CHEBI:30616"/>
    </ligand>
</feature>
<feature type="binding site" evidence="1">
    <location>
        <position position="396"/>
    </location>
    <ligand>
        <name>L-serine</name>
        <dbReference type="ChEBI" id="CHEBI:33384"/>
    </ligand>
</feature>
<organism>
    <name type="scientific">Vibrio cholerae serotype O1 (strain ATCC 39541 / Classical Ogawa 395 / O395)</name>
    <dbReference type="NCBI Taxonomy" id="345073"/>
    <lineage>
        <taxon>Bacteria</taxon>
        <taxon>Pseudomonadati</taxon>
        <taxon>Pseudomonadota</taxon>
        <taxon>Gammaproteobacteria</taxon>
        <taxon>Vibrionales</taxon>
        <taxon>Vibrionaceae</taxon>
        <taxon>Vibrio</taxon>
    </lineage>
</organism>
<keyword id="KW-0030">Aminoacyl-tRNA synthetase</keyword>
<keyword id="KW-0067">ATP-binding</keyword>
<keyword id="KW-0963">Cytoplasm</keyword>
<keyword id="KW-0436">Ligase</keyword>
<keyword id="KW-0547">Nucleotide-binding</keyword>
<keyword id="KW-0648">Protein biosynthesis</keyword>
<name>SYS_VIBC3</name>
<sequence length="435" mass="48570">MLDSKLLRTELDETAAKLARRGFKLDVETIRTLEEQRKSIQVEVENLQSTRNSISKQIGQLMASGDKAGAEAVKQQIGTLGDDLDAKKVELDAVMAQLDAITQTVPNIPDDAVPNGKDDSENVEVSRWGTPKTYDFEVKDHVDLGEMGDGLDFASATKITGARFVVMKGQFARLHRAIAQFMLDLHTDQHGYTELYVPYLVNAETLFGTGQLPKFGQDLFHTEPLTEKASDEEPRRLSLIPTAEVPVTNLVRDTILDEAELPLKMTAHTPCFRSEAGSYGRDTRGLIRMHQFDKVELVQITRPEDSMAALEELTGHAEKVLQLLELPYRKVILCTGDMGFGSCKTYDLEVWVPAQKTYREISSCSNMWDFQARRMQARFRRKGEKKPELVHTLNGSGLAVGRTMVAILENYQEADGRIAIPAVLQKYMGGLTHIG</sequence>